<protein>
    <recommendedName>
        <fullName evidence="1">Tyrosine recombinase XerD</fullName>
    </recommendedName>
</protein>
<gene>
    <name evidence="1" type="primary">xerD</name>
    <name type="synonym">xprB</name>
    <name type="ordered locus">HI_0309</name>
</gene>
<sequence length="297" mass="34120">MKNLALIDLFLNEYWIEKGLSENTVQSYRLDLTALCDWLDKNDLSLETLDAVDLQGFLGERLEKGYKATSTARMLSAMRKLFQYLYREKYRVDDPSAVLSSPKLPSRLPKYLTEQQVSDLLNTPNVEVPLELRDKAMLELLYATGLRVTELVSLTIENMSVQQGVVRVIGKGNKERIVPMGEEAAYWVRQFMLYGRPVLLNGQSSDVVFPSQRAQQMTRQTFWHRVKHYAILADIDADALSPHVLRHAFATHLVNHGADLRVVQMLLGHTDLSTTQIYTHVAKERLKRLHERFHPRG</sequence>
<evidence type="ECO:0000255" key="1">
    <source>
        <dbReference type="HAMAP-Rule" id="MF_01807"/>
    </source>
</evidence>
<evidence type="ECO:0000255" key="2">
    <source>
        <dbReference type="PROSITE-ProRule" id="PRU01246"/>
    </source>
</evidence>
<evidence type="ECO:0000255" key="3">
    <source>
        <dbReference type="PROSITE-ProRule" id="PRU01248"/>
    </source>
</evidence>
<keyword id="KW-0131">Cell cycle</keyword>
<keyword id="KW-0132">Cell division</keyword>
<keyword id="KW-0159">Chromosome partition</keyword>
<keyword id="KW-0963">Cytoplasm</keyword>
<keyword id="KW-0229">DNA integration</keyword>
<keyword id="KW-0233">DNA recombination</keyword>
<keyword id="KW-0238">DNA-binding</keyword>
<keyword id="KW-1185">Reference proteome</keyword>
<accession>P44630</accession>
<name>XERD_HAEIN</name>
<comment type="function">
    <text evidence="1">Site-specific tyrosine recombinase, which acts by catalyzing the cutting and rejoining of the recombining DNA molecules. The XerC-XerD complex is essential to convert dimers of the bacterial chromosome into monomers to permit their segregation at cell division. It also contributes to the segregational stability of plasmids.</text>
</comment>
<comment type="subunit">
    <text evidence="1">Forms a cyclic heterotetrameric complex composed of two molecules of XerC and two molecules of XerD.</text>
</comment>
<comment type="subcellular location">
    <subcellularLocation>
        <location evidence="1">Cytoplasm</location>
    </subcellularLocation>
</comment>
<comment type="similarity">
    <text evidence="1">Belongs to the 'phage' integrase family. XerD subfamily.</text>
</comment>
<reference key="1">
    <citation type="journal article" date="1995" name="Science">
        <title>Whole-genome random sequencing and assembly of Haemophilus influenzae Rd.</title>
        <authorList>
            <person name="Fleischmann R.D."/>
            <person name="Adams M.D."/>
            <person name="White O."/>
            <person name="Clayton R.A."/>
            <person name="Kirkness E.F."/>
            <person name="Kerlavage A.R."/>
            <person name="Bult C.J."/>
            <person name="Tomb J.-F."/>
            <person name="Dougherty B.A."/>
            <person name="Merrick J.M."/>
            <person name="McKenney K."/>
            <person name="Sutton G.G."/>
            <person name="FitzHugh W."/>
            <person name="Fields C.A."/>
            <person name="Gocayne J.D."/>
            <person name="Scott J.D."/>
            <person name="Shirley R."/>
            <person name="Liu L.-I."/>
            <person name="Glodek A."/>
            <person name="Kelley J.M."/>
            <person name="Weidman J.F."/>
            <person name="Phillips C.A."/>
            <person name="Spriggs T."/>
            <person name="Hedblom E."/>
            <person name="Cotton M.D."/>
            <person name="Utterback T.R."/>
            <person name="Hanna M.C."/>
            <person name="Nguyen D.T."/>
            <person name="Saudek D.M."/>
            <person name="Brandon R.C."/>
            <person name="Fine L.D."/>
            <person name="Fritchman J.L."/>
            <person name="Fuhrmann J.L."/>
            <person name="Geoghagen N.S.M."/>
            <person name="Gnehm C.L."/>
            <person name="McDonald L.A."/>
            <person name="Small K.V."/>
            <person name="Fraser C.M."/>
            <person name="Smith H.O."/>
            <person name="Venter J.C."/>
        </authorList>
    </citation>
    <scope>NUCLEOTIDE SEQUENCE [LARGE SCALE GENOMIC DNA]</scope>
    <source>
        <strain>ATCC 51907 / DSM 11121 / KW20 / Rd</strain>
    </source>
</reference>
<dbReference type="EMBL" id="L42023">
    <property type="protein sequence ID" value="AAC21974.1"/>
    <property type="molecule type" value="Genomic_DNA"/>
</dbReference>
<dbReference type="PIR" id="A64061">
    <property type="entry name" value="A64061"/>
</dbReference>
<dbReference type="RefSeq" id="NP_438476.1">
    <property type="nucleotide sequence ID" value="NC_000907.1"/>
</dbReference>
<dbReference type="SMR" id="P44630"/>
<dbReference type="STRING" id="71421.HI_0309"/>
<dbReference type="EnsemblBacteria" id="AAC21974">
    <property type="protein sequence ID" value="AAC21974"/>
    <property type="gene ID" value="HI_0309"/>
</dbReference>
<dbReference type="KEGG" id="hin:HI_0309"/>
<dbReference type="PATRIC" id="fig|71421.8.peg.326"/>
<dbReference type="eggNOG" id="COG4974">
    <property type="taxonomic scope" value="Bacteria"/>
</dbReference>
<dbReference type="HOGENOM" id="CLU_027562_9_0_6"/>
<dbReference type="OrthoDB" id="9801717at2"/>
<dbReference type="PhylomeDB" id="P44630"/>
<dbReference type="BioCyc" id="HINF71421:G1GJ1-327-MONOMER"/>
<dbReference type="Proteomes" id="UP000000579">
    <property type="component" value="Chromosome"/>
</dbReference>
<dbReference type="GO" id="GO:0005737">
    <property type="term" value="C:cytoplasm"/>
    <property type="evidence" value="ECO:0007669"/>
    <property type="project" value="UniProtKB-SubCell"/>
</dbReference>
<dbReference type="GO" id="GO:0048476">
    <property type="term" value="C:Holliday junction resolvase complex"/>
    <property type="evidence" value="ECO:0000318"/>
    <property type="project" value="GO_Central"/>
</dbReference>
<dbReference type="GO" id="GO:0003677">
    <property type="term" value="F:DNA binding"/>
    <property type="evidence" value="ECO:0000318"/>
    <property type="project" value="GO_Central"/>
</dbReference>
<dbReference type="GO" id="GO:0009037">
    <property type="term" value="F:tyrosine-based site-specific recombinase activity"/>
    <property type="evidence" value="ECO:0000318"/>
    <property type="project" value="GO_Central"/>
</dbReference>
<dbReference type="GO" id="GO:0051301">
    <property type="term" value="P:cell division"/>
    <property type="evidence" value="ECO:0007669"/>
    <property type="project" value="UniProtKB-KW"/>
</dbReference>
<dbReference type="GO" id="GO:0007059">
    <property type="term" value="P:chromosome segregation"/>
    <property type="evidence" value="ECO:0000318"/>
    <property type="project" value="GO_Central"/>
</dbReference>
<dbReference type="GO" id="GO:0006310">
    <property type="term" value="P:DNA recombination"/>
    <property type="evidence" value="ECO:0000318"/>
    <property type="project" value="GO_Central"/>
</dbReference>
<dbReference type="GO" id="GO:0006313">
    <property type="term" value="P:DNA transposition"/>
    <property type="evidence" value="ECO:0007669"/>
    <property type="project" value="UniProtKB-UniRule"/>
</dbReference>
<dbReference type="GO" id="GO:0071139">
    <property type="term" value="P:resolution of DNA recombination intermediates"/>
    <property type="evidence" value="ECO:0000318"/>
    <property type="project" value="GO_Central"/>
</dbReference>
<dbReference type="CDD" id="cd00798">
    <property type="entry name" value="INT_XerDC_C"/>
    <property type="match status" value="1"/>
</dbReference>
<dbReference type="Gene3D" id="1.10.150.130">
    <property type="match status" value="1"/>
</dbReference>
<dbReference type="Gene3D" id="1.10.443.10">
    <property type="entry name" value="Intergrase catalytic core"/>
    <property type="match status" value="1"/>
</dbReference>
<dbReference type="HAMAP" id="MF_01808">
    <property type="entry name" value="Recomb_XerC_XerD"/>
    <property type="match status" value="1"/>
</dbReference>
<dbReference type="HAMAP" id="MF_01807">
    <property type="entry name" value="Recomb_XerD"/>
    <property type="match status" value="1"/>
</dbReference>
<dbReference type="InterPro" id="IPR044068">
    <property type="entry name" value="CB"/>
</dbReference>
<dbReference type="InterPro" id="IPR011010">
    <property type="entry name" value="DNA_brk_join_enz"/>
</dbReference>
<dbReference type="InterPro" id="IPR013762">
    <property type="entry name" value="Integrase-like_cat_sf"/>
</dbReference>
<dbReference type="InterPro" id="IPR002104">
    <property type="entry name" value="Integrase_catalytic"/>
</dbReference>
<dbReference type="InterPro" id="IPR010998">
    <property type="entry name" value="Integrase_recombinase_N"/>
</dbReference>
<dbReference type="InterPro" id="IPR004107">
    <property type="entry name" value="Integrase_SAM-like_N"/>
</dbReference>
<dbReference type="InterPro" id="IPR011932">
    <property type="entry name" value="Recomb_XerD"/>
</dbReference>
<dbReference type="InterPro" id="IPR023009">
    <property type="entry name" value="Tyrosine_recombinase_XerC/XerD"/>
</dbReference>
<dbReference type="InterPro" id="IPR050090">
    <property type="entry name" value="Tyrosine_recombinase_XerCD"/>
</dbReference>
<dbReference type="NCBIfam" id="NF001399">
    <property type="entry name" value="PRK00283.1"/>
    <property type="match status" value="1"/>
</dbReference>
<dbReference type="NCBIfam" id="TIGR02225">
    <property type="entry name" value="recomb_XerD"/>
    <property type="match status" value="1"/>
</dbReference>
<dbReference type="PANTHER" id="PTHR30349">
    <property type="entry name" value="PHAGE INTEGRASE-RELATED"/>
    <property type="match status" value="1"/>
</dbReference>
<dbReference type="PANTHER" id="PTHR30349:SF90">
    <property type="entry name" value="TYROSINE RECOMBINASE XERD"/>
    <property type="match status" value="1"/>
</dbReference>
<dbReference type="Pfam" id="PF02899">
    <property type="entry name" value="Phage_int_SAM_1"/>
    <property type="match status" value="1"/>
</dbReference>
<dbReference type="Pfam" id="PF00589">
    <property type="entry name" value="Phage_integrase"/>
    <property type="match status" value="1"/>
</dbReference>
<dbReference type="SUPFAM" id="SSF56349">
    <property type="entry name" value="DNA breaking-rejoining enzymes"/>
    <property type="match status" value="1"/>
</dbReference>
<dbReference type="PROSITE" id="PS51900">
    <property type="entry name" value="CB"/>
    <property type="match status" value="1"/>
</dbReference>
<dbReference type="PROSITE" id="PS51898">
    <property type="entry name" value="TYR_RECOMBINASE"/>
    <property type="match status" value="1"/>
</dbReference>
<organism>
    <name type="scientific">Haemophilus influenzae (strain ATCC 51907 / DSM 11121 / KW20 / Rd)</name>
    <dbReference type="NCBI Taxonomy" id="71421"/>
    <lineage>
        <taxon>Bacteria</taxon>
        <taxon>Pseudomonadati</taxon>
        <taxon>Pseudomonadota</taxon>
        <taxon>Gammaproteobacteria</taxon>
        <taxon>Pasteurellales</taxon>
        <taxon>Pasteurellaceae</taxon>
        <taxon>Haemophilus</taxon>
    </lineage>
</organism>
<proteinExistence type="inferred from homology"/>
<feature type="chain" id="PRO_0000095390" description="Tyrosine recombinase XerD">
    <location>
        <begin position="1"/>
        <end position="297"/>
    </location>
</feature>
<feature type="domain" description="Core-binding (CB)" evidence="3">
    <location>
        <begin position="1"/>
        <end position="86"/>
    </location>
</feature>
<feature type="domain" description="Tyr recombinase" evidence="2">
    <location>
        <begin position="107"/>
        <end position="291"/>
    </location>
</feature>
<feature type="active site" evidence="1">
    <location>
        <position position="147"/>
    </location>
</feature>
<feature type="active site" evidence="1">
    <location>
        <position position="171"/>
    </location>
</feature>
<feature type="active site" evidence="1">
    <location>
        <position position="243"/>
    </location>
</feature>
<feature type="active site" evidence="1">
    <location>
        <position position="246"/>
    </location>
</feature>
<feature type="active site" evidence="1">
    <location>
        <position position="269"/>
    </location>
</feature>
<feature type="active site" description="O-(3'-phospho-DNA)-tyrosine intermediate" evidence="1">
    <location>
        <position position="278"/>
    </location>
</feature>